<accession>B8ZUG9</accession>
<reference key="1">
    <citation type="journal article" date="2009" name="Nat. Genet.">
        <title>Comparative genomic and phylogeographic analysis of Mycobacterium leprae.</title>
        <authorList>
            <person name="Monot M."/>
            <person name="Honore N."/>
            <person name="Garnier T."/>
            <person name="Zidane N."/>
            <person name="Sherafi D."/>
            <person name="Paniz-Mondolfi A."/>
            <person name="Matsuoka M."/>
            <person name="Taylor G.M."/>
            <person name="Donoghue H.D."/>
            <person name="Bouwman A."/>
            <person name="Mays S."/>
            <person name="Watson C."/>
            <person name="Lockwood D."/>
            <person name="Khamispour A."/>
            <person name="Dowlati Y."/>
            <person name="Jianping S."/>
            <person name="Rea T.H."/>
            <person name="Vera-Cabrera L."/>
            <person name="Stefani M.M."/>
            <person name="Banu S."/>
            <person name="Macdonald M."/>
            <person name="Sapkota B.R."/>
            <person name="Spencer J.S."/>
            <person name="Thomas J."/>
            <person name="Harshman K."/>
            <person name="Singh P."/>
            <person name="Busso P."/>
            <person name="Gattiker A."/>
            <person name="Rougemont J."/>
            <person name="Brennan P.J."/>
            <person name="Cole S.T."/>
        </authorList>
    </citation>
    <scope>NUCLEOTIDE SEQUENCE [LARGE SCALE GENOMIC DNA]</scope>
    <source>
        <strain>Br4923</strain>
    </source>
</reference>
<comment type="function">
    <text evidence="1">Catalyzes the attachment of threonine to tRNA(Thr) in a two-step reaction: L-threonine is first activated by ATP to form Thr-AMP and then transferred to the acceptor end of tRNA(Thr). Also edits incorrectly charged L-seryl-tRNA(Thr).</text>
</comment>
<comment type="catalytic activity">
    <reaction evidence="1">
        <text>tRNA(Thr) + L-threonine + ATP = L-threonyl-tRNA(Thr) + AMP + diphosphate + H(+)</text>
        <dbReference type="Rhea" id="RHEA:24624"/>
        <dbReference type="Rhea" id="RHEA-COMP:9670"/>
        <dbReference type="Rhea" id="RHEA-COMP:9704"/>
        <dbReference type="ChEBI" id="CHEBI:15378"/>
        <dbReference type="ChEBI" id="CHEBI:30616"/>
        <dbReference type="ChEBI" id="CHEBI:33019"/>
        <dbReference type="ChEBI" id="CHEBI:57926"/>
        <dbReference type="ChEBI" id="CHEBI:78442"/>
        <dbReference type="ChEBI" id="CHEBI:78534"/>
        <dbReference type="ChEBI" id="CHEBI:456215"/>
        <dbReference type="EC" id="6.1.1.3"/>
    </reaction>
</comment>
<comment type="cofactor">
    <cofactor evidence="1">
        <name>Zn(2+)</name>
        <dbReference type="ChEBI" id="CHEBI:29105"/>
    </cofactor>
    <text evidence="1">Binds 1 zinc ion per subunit.</text>
</comment>
<comment type="subunit">
    <text evidence="1">Homodimer.</text>
</comment>
<comment type="subcellular location">
    <subcellularLocation>
        <location evidence="1">Cytoplasm</location>
    </subcellularLocation>
</comment>
<comment type="similarity">
    <text evidence="1">Belongs to the class-II aminoacyl-tRNA synthetase family.</text>
</comment>
<dbReference type="EC" id="6.1.1.3" evidence="1"/>
<dbReference type="EMBL" id="FM211192">
    <property type="protein sequence ID" value="CAR70549.1"/>
    <property type="molecule type" value="Genomic_DNA"/>
</dbReference>
<dbReference type="SMR" id="B8ZUG9"/>
<dbReference type="KEGG" id="mlb:MLBr00456"/>
<dbReference type="HOGENOM" id="CLU_008554_0_1_11"/>
<dbReference type="Proteomes" id="UP000006900">
    <property type="component" value="Chromosome"/>
</dbReference>
<dbReference type="GO" id="GO:0005737">
    <property type="term" value="C:cytoplasm"/>
    <property type="evidence" value="ECO:0007669"/>
    <property type="project" value="UniProtKB-SubCell"/>
</dbReference>
<dbReference type="GO" id="GO:0005524">
    <property type="term" value="F:ATP binding"/>
    <property type="evidence" value="ECO:0007669"/>
    <property type="project" value="UniProtKB-UniRule"/>
</dbReference>
<dbReference type="GO" id="GO:0046872">
    <property type="term" value="F:metal ion binding"/>
    <property type="evidence" value="ECO:0007669"/>
    <property type="project" value="UniProtKB-KW"/>
</dbReference>
<dbReference type="GO" id="GO:0004829">
    <property type="term" value="F:threonine-tRNA ligase activity"/>
    <property type="evidence" value="ECO:0007669"/>
    <property type="project" value="UniProtKB-UniRule"/>
</dbReference>
<dbReference type="GO" id="GO:0000049">
    <property type="term" value="F:tRNA binding"/>
    <property type="evidence" value="ECO:0007669"/>
    <property type="project" value="UniProtKB-KW"/>
</dbReference>
<dbReference type="GO" id="GO:0006435">
    <property type="term" value="P:threonyl-tRNA aminoacylation"/>
    <property type="evidence" value="ECO:0007669"/>
    <property type="project" value="UniProtKB-UniRule"/>
</dbReference>
<dbReference type="CDD" id="cd00860">
    <property type="entry name" value="ThrRS_anticodon"/>
    <property type="match status" value="1"/>
</dbReference>
<dbReference type="CDD" id="cd00771">
    <property type="entry name" value="ThrRS_core"/>
    <property type="match status" value="1"/>
</dbReference>
<dbReference type="FunFam" id="3.30.54.20:FF:000003">
    <property type="entry name" value="Threonine--tRNA ligase"/>
    <property type="match status" value="1"/>
</dbReference>
<dbReference type="FunFam" id="3.30.930.10:FF:000019">
    <property type="entry name" value="Threonine--tRNA ligase"/>
    <property type="match status" value="1"/>
</dbReference>
<dbReference type="FunFam" id="3.40.50.800:FF:000001">
    <property type="entry name" value="Threonine--tRNA ligase"/>
    <property type="match status" value="1"/>
</dbReference>
<dbReference type="FunFam" id="3.30.980.10:FF:000005">
    <property type="entry name" value="Threonyl-tRNA synthetase, mitochondrial"/>
    <property type="match status" value="1"/>
</dbReference>
<dbReference type="Gene3D" id="3.30.54.20">
    <property type="match status" value="1"/>
</dbReference>
<dbReference type="Gene3D" id="3.40.50.800">
    <property type="entry name" value="Anticodon-binding domain"/>
    <property type="match status" value="1"/>
</dbReference>
<dbReference type="Gene3D" id="3.30.930.10">
    <property type="entry name" value="Bira Bifunctional Protein, Domain 2"/>
    <property type="match status" value="1"/>
</dbReference>
<dbReference type="Gene3D" id="3.30.980.10">
    <property type="entry name" value="Threonyl-trna Synthetase, Chain A, domain 2"/>
    <property type="match status" value="1"/>
</dbReference>
<dbReference type="HAMAP" id="MF_00184">
    <property type="entry name" value="Thr_tRNA_synth"/>
    <property type="match status" value="1"/>
</dbReference>
<dbReference type="InterPro" id="IPR002314">
    <property type="entry name" value="aa-tRNA-synt_IIb"/>
</dbReference>
<dbReference type="InterPro" id="IPR006195">
    <property type="entry name" value="aa-tRNA-synth_II"/>
</dbReference>
<dbReference type="InterPro" id="IPR045864">
    <property type="entry name" value="aa-tRNA-synth_II/BPL/LPL"/>
</dbReference>
<dbReference type="InterPro" id="IPR004154">
    <property type="entry name" value="Anticodon-bd"/>
</dbReference>
<dbReference type="InterPro" id="IPR036621">
    <property type="entry name" value="Anticodon-bd_dom_sf"/>
</dbReference>
<dbReference type="InterPro" id="IPR004095">
    <property type="entry name" value="TGS"/>
</dbReference>
<dbReference type="InterPro" id="IPR002320">
    <property type="entry name" value="Thr-tRNA-ligase_IIa"/>
</dbReference>
<dbReference type="InterPro" id="IPR018163">
    <property type="entry name" value="Thr/Ala-tRNA-synth_IIc_edit"/>
</dbReference>
<dbReference type="InterPro" id="IPR047246">
    <property type="entry name" value="ThrRS_anticodon"/>
</dbReference>
<dbReference type="InterPro" id="IPR033728">
    <property type="entry name" value="ThrRS_core"/>
</dbReference>
<dbReference type="InterPro" id="IPR012947">
    <property type="entry name" value="tRNA_SAD"/>
</dbReference>
<dbReference type="NCBIfam" id="TIGR00418">
    <property type="entry name" value="thrS"/>
    <property type="match status" value="1"/>
</dbReference>
<dbReference type="PANTHER" id="PTHR11451:SF44">
    <property type="entry name" value="THREONINE--TRNA LIGASE, CHLOROPLASTIC_MITOCHONDRIAL 2"/>
    <property type="match status" value="1"/>
</dbReference>
<dbReference type="PANTHER" id="PTHR11451">
    <property type="entry name" value="THREONINE-TRNA LIGASE"/>
    <property type="match status" value="1"/>
</dbReference>
<dbReference type="Pfam" id="PF03129">
    <property type="entry name" value="HGTP_anticodon"/>
    <property type="match status" value="1"/>
</dbReference>
<dbReference type="Pfam" id="PF00587">
    <property type="entry name" value="tRNA-synt_2b"/>
    <property type="match status" value="1"/>
</dbReference>
<dbReference type="Pfam" id="PF07973">
    <property type="entry name" value="tRNA_SAD"/>
    <property type="match status" value="1"/>
</dbReference>
<dbReference type="PRINTS" id="PR01047">
    <property type="entry name" value="TRNASYNTHTHR"/>
</dbReference>
<dbReference type="SMART" id="SM00863">
    <property type="entry name" value="tRNA_SAD"/>
    <property type="match status" value="1"/>
</dbReference>
<dbReference type="SUPFAM" id="SSF52954">
    <property type="entry name" value="Class II aaRS ABD-related"/>
    <property type="match status" value="1"/>
</dbReference>
<dbReference type="SUPFAM" id="SSF55681">
    <property type="entry name" value="Class II aaRS and biotin synthetases"/>
    <property type="match status" value="1"/>
</dbReference>
<dbReference type="SUPFAM" id="SSF55186">
    <property type="entry name" value="ThrRS/AlaRS common domain"/>
    <property type="match status" value="1"/>
</dbReference>
<dbReference type="PROSITE" id="PS50862">
    <property type="entry name" value="AA_TRNA_LIGASE_II"/>
    <property type="match status" value="1"/>
</dbReference>
<dbReference type="PROSITE" id="PS51880">
    <property type="entry name" value="TGS"/>
    <property type="match status" value="1"/>
</dbReference>
<protein>
    <recommendedName>
        <fullName evidence="1">Threonine--tRNA ligase</fullName>
        <ecNumber evidence="1">6.1.1.3</ecNumber>
    </recommendedName>
    <alternativeName>
        <fullName evidence="1">Threonyl-tRNA synthetase</fullName>
        <shortName evidence="1">ThrRS</shortName>
    </alternativeName>
</protein>
<gene>
    <name evidence="1" type="primary">thrS</name>
    <name type="ordered locus">MLBr00456</name>
</gene>
<name>SYT_MYCLB</name>
<keyword id="KW-0030">Aminoacyl-tRNA synthetase</keyword>
<keyword id="KW-0067">ATP-binding</keyword>
<keyword id="KW-0963">Cytoplasm</keyword>
<keyword id="KW-0436">Ligase</keyword>
<keyword id="KW-0479">Metal-binding</keyword>
<keyword id="KW-0547">Nucleotide-binding</keyword>
<keyword id="KW-0648">Protein biosynthesis</keyword>
<keyword id="KW-0694">RNA-binding</keyword>
<keyword id="KW-0820">tRNA-binding</keyword>
<keyword id="KW-0862">Zinc</keyword>
<organism>
    <name type="scientific">Mycobacterium leprae (strain Br4923)</name>
    <dbReference type="NCBI Taxonomy" id="561304"/>
    <lineage>
        <taxon>Bacteria</taxon>
        <taxon>Bacillati</taxon>
        <taxon>Actinomycetota</taxon>
        <taxon>Actinomycetes</taxon>
        <taxon>Mycobacteriales</taxon>
        <taxon>Mycobacteriaceae</taxon>
        <taxon>Mycobacterium</taxon>
    </lineage>
</organism>
<sequence length="702" mass="78372">MSAPVHPVPGADGGDPLRPATPGLRSPQVPIQVPAGSTAAAAVSEAGLPTHGAPDAIVVVRDADGKLRDLSWVPDVDVEVTPVPVNTDDGRSVIRHSTAHVLAQAVQDLFPQAKLGIGPPITDGFYYDFDVAEPFTPEDLKALEKRMRQIVKEGQLFSRRIYESKEQARTEWAGEPYKLELVDDESGDAEIMEVGGDELTAYDNLNARNGERIWGDLCRGPHIPTTKHIPAFKLTRSSAAYWRGNQKNASLQRIYGTAWESQEALDRHLEMITEAQRRDHRKLGIELDLFSFPDEIGSGLAIFHPKGSIVRREMEEYSRRKHIEAGYQFVNTPHITKAQLFHTSGHLDWYAEGIFPPMHLDAEHNDDGTVRKPGQDYYLKPMNCPMHTLIFSSRGRSYRELPLRLFEFGTIYRYEKSGVVHGLTRARGFTMDDSHIFCTREQLHCELASLLRFVLDLLGDYGLEDFYLELSTKDPEKFVGSEEIWEEATAALAEVAENSTLPLVPDPGGAAFYGPKISVQVRDALGRSWQMSTIQVDFNFPERFALEYTSADGTRQRPVMIHRALFGSIERFFGILTEHYAGAFPAWLAPIQVVGIPVTGEHVSYLEEVAAQLKSCGVRTEVDVSDDRMAKKIVRHTNQKVPFMLLAGDRDVRTGSVSFRFGDRTQINGVARDSAVEAIVCWIVDRENDFPTAELVKVTGGE</sequence>
<evidence type="ECO:0000255" key="1">
    <source>
        <dbReference type="HAMAP-Rule" id="MF_00184"/>
    </source>
</evidence>
<evidence type="ECO:0000255" key="2">
    <source>
        <dbReference type="PROSITE-ProRule" id="PRU01228"/>
    </source>
</evidence>
<evidence type="ECO:0000256" key="3">
    <source>
        <dbReference type="SAM" id="MobiDB-lite"/>
    </source>
</evidence>
<feature type="chain" id="PRO_1000199557" description="Threonine--tRNA ligase">
    <location>
        <begin position="1"/>
        <end position="702"/>
    </location>
</feature>
<feature type="domain" description="TGS" evidence="2">
    <location>
        <begin position="15"/>
        <end position="84"/>
    </location>
</feature>
<feature type="region of interest" description="Disordered" evidence="3">
    <location>
        <begin position="1"/>
        <end position="30"/>
    </location>
</feature>
<feature type="region of interest" description="Catalytic" evidence="1">
    <location>
        <begin position="279"/>
        <end position="585"/>
    </location>
</feature>
<feature type="binding site" evidence="1">
    <location>
        <position position="384"/>
    </location>
    <ligand>
        <name>Zn(2+)</name>
        <dbReference type="ChEBI" id="CHEBI:29105"/>
    </ligand>
</feature>
<feature type="binding site" evidence="1">
    <location>
        <position position="435"/>
    </location>
    <ligand>
        <name>Zn(2+)</name>
        <dbReference type="ChEBI" id="CHEBI:29105"/>
    </ligand>
</feature>
<feature type="binding site" evidence="1">
    <location>
        <position position="562"/>
    </location>
    <ligand>
        <name>Zn(2+)</name>
        <dbReference type="ChEBI" id="CHEBI:29105"/>
    </ligand>
</feature>
<proteinExistence type="inferred from homology"/>